<sequence>MTNKIIQQLEAEQMSKEIPTFAPGDTVVVQVKVKEGERSRLQAFEGVVIAKRNRGLNSAFTVRKISSGVGVERTFQTYSPQIDSLAVKRRGDVRKAKLYYLRDLSGKAARIKEKLS</sequence>
<organism>
    <name type="scientific">Pseudomonas putida (strain ATCC 700007 / DSM 6899 / JCM 31910 / BCRC 17059 / LMG 24140 / F1)</name>
    <dbReference type="NCBI Taxonomy" id="351746"/>
    <lineage>
        <taxon>Bacteria</taxon>
        <taxon>Pseudomonadati</taxon>
        <taxon>Pseudomonadota</taxon>
        <taxon>Gammaproteobacteria</taxon>
        <taxon>Pseudomonadales</taxon>
        <taxon>Pseudomonadaceae</taxon>
        <taxon>Pseudomonas</taxon>
    </lineage>
</organism>
<name>RL19_PSEP1</name>
<keyword id="KW-0687">Ribonucleoprotein</keyword>
<keyword id="KW-0689">Ribosomal protein</keyword>
<proteinExistence type="inferred from homology"/>
<accession>A5W8C0</accession>
<reference key="1">
    <citation type="submission" date="2007-05" db="EMBL/GenBank/DDBJ databases">
        <title>Complete sequence of Pseudomonas putida F1.</title>
        <authorList>
            <consortium name="US DOE Joint Genome Institute"/>
            <person name="Copeland A."/>
            <person name="Lucas S."/>
            <person name="Lapidus A."/>
            <person name="Barry K."/>
            <person name="Detter J.C."/>
            <person name="Glavina del Rio T."/>
            <person name="Hammon N."/>
            <person name="Israni S."/>
            <person name="Dalin E."/>
            <person name="Tice H."/>
            <person name="Pitluck S."/>
            <person name="Chain P."/>
            <person name="Malfatti S."/>
            <person name="Shin M."/>
            <person name="Vergez L."/>
            <person name="Schmutz J."/>
            <person name="Larimer F."/>
            <person name="Land M."/>
            <person name="Hauser L."/>
            <person name="Kyrpides N."/>
            <person name="Lykidis A."/>
            <person name="Parales R."/>
            <person name="Richardson P."/>
        </authorList>
    </citation>
    <scope>NUCLEOTIDE SEQUENCE [LARGE SCALE GENOMIC DNA]</scope>
    <source>
        <strain>ATCC 700007 / DSM 6899 / JCM 31910 / BCRC 17059 / LMG 24140 / F1</strain>
    </source>
</reference>
<comment type="function">
    <text evidence="1">This protein is located at the 30S-50S ribosomal subunit interface and may play a role in the structure and function of the aminoacyl-tRNA binding site.</text>
</comment>
<comment type="similarity">
    <text evidence="1">Belongs to the bacterial ribosomal protein bL19 family.</text>
</comment>
<evidence type="ECO:0000255" key="1">
    <source>
        <dbReference type="HAMAP-Rule" id="MF_00402"/>
    </source>
</evidence>
<evidence type="ECO:0000305" key="2"/>
<dbReference type="EMBL" id="CP000712">
    <property type="protein sequence ID" value="ABQ80380.1"/>
    <property type="molecule type" value="Genomic_DNA"/>
</dbReference>
<dbReference type="SMR" id="A5W8C0"/>
<dbReference type="KEGG" id="ppf:Pput_4256"/>
<dbReference type="eggNOG" id="COG0335">
    <property type="taxonomic scope" value="Bacteria"/>
</dbReference>
<dbReference type="HOGENOM" id="CLU_103507_2_1_6"/>
<dbReference type="GO" id="GO:0022625">
    <property type="term" value="C:cytosolic large ribosomal subunit"/>
    <property type="evidence" value="ECO:0007669"/>
    <property type="project" value="TreeGrafter"/>
</dbReference>
<dbReference type="GO" id="GO:0003735">
    <property type="term" value="F:structural constituent of ribosome"/>
    <property type="evidence" value="ECO:0007669"/>
    <property type="project" value="InterPro"/>
</dbReference>
<dbReference type="GO" id="GO:0006412">
    <property type="term" value="P:translation"/>
    <property type="evidence" value="ECO:0007669"/>
    <property type="project" value="UniProtKB-UniRule"/>
</dbReference>
<dbReference type="FunFam" id="2.30.30.790:FF:000001">
    <property type="entry name" value="50S ribosomal protein L19"/>
    <property type="match status" value="1"/>
</dbReference>
<dbReference type="Gene3D" id="2.30.30.790">
    <property type="match status" value="1"/>
</dbReference>
<dbReference type="HAMAP" id="MF_00402">
    <property type="entry name" value="Ribosomal_bL19"/>
    <property type="match status" value="1"/>
</dbReference>
<dbReference type="InterPro" id="IPR001857">
    <property type="entry name" value="Ribosomal_bL19"/>
</dbReference>
<dbReference type="InterPro" id="IPR018257">
    <property type="entry name" value="Ribosomal_bL19_CS"/>
</dbReference>
<dbReference type="InterPro" id="IPR038657">
    <property type="entry name" value="Ribosomal_bL19_sf"/>
</dbReference>
<dbReference type="InterPro" id="IPR008991">
    <property type="entry name" value="Translation_prot_SH3-like_sf"/>
</dbReference>
<dbReference type="NCBIfam" id="TIGR01024">
    <property type="entry name" value="rplS_bact"/>
    <property type="match status" value="1"/>
</dbReference>
<dbReference type="PANTHER" id="PTHR15680:SF9">
    <property type="entry name" value="LARGE RIBOSOMAL SUBUNIT PROTEIN BL19M"/>
    <property type="match status" value="1"/>
</dbReference>
<dbReference type="PANTHER" id="PTHR15680">
    <property type="entry name" value="RIBOSOMAL PROTEIN L19"/>
    <property type="match status" value="1"/>
</dbReference>
<dbReference type="Pfam" id="PF01245">
    <property type="entry name" value="Ribosomal_L19"/>
    <property type="match status" value="1"/>
</dbReference>
<dbReference type="PIRSF" id="PIRSF002191">
    <property type="entry name" value="Ribosomal_L19"/>
    <property type="match status" value="1"/>
</dbReference>
<dbReference type="PRINTS" id="PR00061">
    <property type="entry name" value="RIBOSOMALL19"/>
</dbReference>
<dbReference type="SUPFAM" id="SSF50104">
    <property type="entry name" value="Translation proteins SH3-like domain"/>
    <property type="match status" value="1"/>
</dbReference>
<dbReference type="PROSITE" id="PS01015">
    <property type="entry name" value="RIBOSOMAL_L19"/>
    <property type="match status" value="1"/>
</dbReference>
<feature type="chain" id="PRO_1000049723" description="Large ribosomal subunit protein bL19">
    <location>
        <begin position="1"/>
        <end position="116"/>
    </location>
</feature>
<protein>
    <recommendedName>
        <fullName evidence="1">Large ribosomal subunit protein bL19</fullName>
    </recommendedName>
    <alternativeName>
        <fullName evidence="2">50S ribosomal protein L19</fullName>
    </alternativeName>
</protein>
<gene>
    <name evidence="1" type="primary">rplS</name>
    <name type="ordered locus">Pput_4256</name>
</gene>